<proteinExistence type="inferred from homology"/>
<feature type="chain" id="PRO_0000298301" description="Photosystem II reaction center protein I">
    <location>
        <begin position="1"/>
        <end position="42"/>
    </location>
</feature>
<feature type="transmembrane region" description="Helical" evidence="1">
    <location>
        <begin position="6"/>
        <end position="26"/>
    </location>
</feature>
<evidence type="ECO:0000255" key="1">
    <source>
        <dbReference type="HAMAP-Rule" id="MF_01316"/>
    </source>
</evidence>
<evidence type="ECO:0000305" key="2"/>
<sequence length="42" mass="4782">MLALKISVYTVVFFFVGIFLFGFLASDPTRTPNRKDLESPQD</sequence>
<organism>
    <name type="scientific">Prochlorococcus marinus (strain NATL2A)</name>
    <dbReference type="NCBI Taxonomy" id="59920"/>
    <lineage>
        <taxon>Bacteria</taxon>
        <taxon>Bacillati</taxon>
        <taxon>Cyanobacteriota</taxon>
        <taxon>Cyanophyceae</taxon>
        <taxon>Synechococcales</taxon>
        <taxon>Prochlorococcaceae</taxon>
        <taxon>Prochlorococcus</taxon>
    </lineage>
</organism>
<comment type="function">
    <text evidence="1">One of the components of the core complex of photosystem II (PSII), required for its stability and/or assembly. PSII is a light-driven water:plastoquinone oxidoreductase that uses light energy to abstract electrons from H(2)O, generating O(2) and a proton gradient subsequently used for ATP formation. It consists of a core antenna complex that captures photons, and an electron transfer chain that converts photonic excitation into a charge separation.</text>
</comment>
<comment type="subunit">
    <text evidence="2">PSII is composed of 1 copy each of membrane proteins PsbA, PsbB, PsbC, PsbD, PsbE, PsbF, PsbH, PsbI, PsbJ, PsbK, PsbL, PsbM, PsbT, PsbX, PsbY, Psb30/Ycf12, peripheral proteins PsbO, CyanoQ (PsbQ), PsbU, PsbV and a large number of cofactors. It forms dimeric complexes.</text>
</comment>
<comment type="subcellular location">
    <subcellularLocation>
        <location evidence="1">Cellular thylakoid membrane</location>
        <topology evidence="1">Single-pass membrane protein</topology>
    </subcellularLocation>
</comment>
<comment type="similarity">
    <text evidence="1">Belongs to the PsbI family.</text>
</comment>
<accession>Q46HC1</accession>
<dbReference type="EMBL" id="CP000095">
    <property type="protein sequence ID" value="AAZ59107.1"/>
    <property type="molecule type" value="Genomic_DNA"/>
</dbReference>
<dbReference type="RefSeq" id="WP_011294252.1">
    <property type="nucleotide sequence ID" value="NC_007335.2"/>
</dbReference>
<dbReference type="SMR" id="Q46HC1"/>
<dbReference type="STRING" id="59920.PMN2A_1619"/>
<dbReference type="KEGG" id="pmn:PMN2A_1619"/>
<dbReference type="HOGENOM" id="CLU_212150_0_0_3"/>
<dbReference type="PhylomeDB" id="Q46HC1"/>
<dbReference type="Proteomes" id="UP000002535">
    <property type="component" value="Chromosome"/>
</dbReference>
<dbReference type="GO" id="GO:0009539">
    <property type="term" value="C:photosystem II reaction center"/>
    <property type="evidence" value="ECO:0007669"/>
    <property type="project" value="InterPro"/>
</dbReference>
<dbReference type="GO" id="GO:0031676">
    <property type="term" value="C:plasma membrane-derived thylakoid membrane"/>
    <property type="evidence" value="ECO:0007669"/>
    <property type="project" value="UniProtKB-SubCell"/>
</dbReference>
<dbReference type="GO" id="GO:0015979">
    <property type="term" value="P:photosynthesis"/>
    <property type="evidence" value="ECO:0007669"/>
    <property type="project" value="UniProtKB-UniRule"/>
</dbReference>
<dbReference type="HAMAP" id="MF_01316">
    <property type="entry name" value="PSII_PsbI"/>
    <property type="match status" value="1"/>
</dbReference>
<dbReference type="InterPro" id="IPR003686">
    <property type="entry name" value="PSII_PsbI"/>
</dbReference>
<dbReference type="InterPro" id="IPR037271">
    <property type="entry name" value="PSII_PsbI_sf"/>
</dbReference>
<dbReference type="NCBIfam" id="NF002735">
    <property type="entry name" value="PRK02655.1"/>
    <property type="match status" value="1"/>
</dbReference>
<dbReference type="PANTHER" id="PTHR35772">
    <property type="entry name" value="PHOTOSYSTEM II REACTION CENTER PROTEIN I"/>
    <property type="match status" value="1"/>
</dbReference>
<dbReference type="PANTHER" id="PTHR35772:SF1">
    <property type="entry name" value="PHOTOSYSTEM II REACTION CENTER PROTEIN I"/>
    <property type="match status" value="1"/>
</dbReference>
<dbReference type="Pfam" id="PF02532">
    <property type="entry name" value="PsbI"/>
    <property type="match status" value="1"/>
</dbReference>
<dbReference type="SUPFAM" id="SSF161041">
    <property type="entry name" value="Photosystem II reaction center protein I, PsbI"/>
    <property type="match status" value="1"/>
</dbReference>
<gene>
    <name evidence="1" type="primary">psbI</name>
    <name type="ordered locus">PMN2A_1619</name>
</gene>
<reference key="1">
    <citation type="journal article" date="2007" name="PLoS Genet.">
        <title>Patterns and implications of gene gain and loss in the evolution of Prochlorococcus.</title>
        <authorList>
            <person name="Kettler G.C."/>
            <person name="Martiny A.C."/>
            <person name="Huang K."/>
            <person name="Zucker J."/>
            <person name="Coleman M.L."/>
            <person name="Rodrigue S."/>
            <person name="Chen F."/>
            <person name="Lapidus A."/>
            <person name="Ferriera S."/>
            <person name="Johnson J."/>
            <person name="Steglich C."/>
            <person name="Church G.M."/>
            <person name="Richardson P."/>
            <person name="Chisholm S.W."/>
        </authorList>
    </citation>
    <scope>NUCLEOTIDE SEQUENCE [LARGE SCALE GENOMIC DNA]</scope>
    <source>
        <strain>NATL2A</strain>
    </source>
</reference>
<keyword id="KW-0472">Membrane</keyword>
<keyword id="KW-0602">Photosynthesis</keyword>
<keyword id="KW-0604">Photosystem II</keyword>
<keyword id="KW-0674">Reaction center</keyword>
<keyword id="KW-1185">Reference proteome</keyword>
<keyword id="KW-0793">Thylakoid</keyword>
<keyword id="KW-0812">Transmembrane</keyword>
<keyword id="KW-1133">Transmembrane helix</keyword>
<name>PSBI_PROMT</name>
<protein>
    <recommendedName>
        <fullName evidence="1">Photosystem II reaction center protein I</fullName>
        <shortName evidence="1">PSII-I</shortName>
    </recommendedName>
    <alternativeName>
        <fullName evidence="1">PSII 4.4 kDa protein</fullName>
    </alternativeName>
</protein>